<gene>
    <name type="primary">gpmA</name>
    <name type="synonym">pgam</name>
    <name type="ORF">DDB_G0285311</name>
</gene>
<evidence type="ECO:0000250" key="1"/>
<evidence type="ECO:0000250" key="2">
    <source>
        <dbReference type="UniProtKB" id="P00950"/>
    </source>
</evidence>
<evidence type="ECO:0000250" key="3">
    <source>
        <dbReference type="UniProtKB" id="P18669"/>
    </source>
</evidence>
<evidence type="ECO:0000305" key="4"/>
<accession>Q54NE6</accession>
<feature type="chain" id="PRO_0000328074" description="Probable phosphoglycerate mutase">
    <location>
        <begin position="1"/>
        <end position="249"/>
    </location>
</feature>
<feature type="active site" description="Tele-phosphohistidine intermediate" evidence="3">
    <location>
        <position position="10"/>
    </location>
</feature>
<feature type="active site" description="Proton donor/acceptor" evidence="3">
    <location>
        <position position="88"/>
    </location>
</feature>
<feature type="binding site" evidence="2">
    <location>
        <begin position="9"/>
        <end position="16"/>
    </location>
    <ligand>
        <name>substrate</name>
    </ligand>
</feature>
<feature type="binding site" evidence="2">
    <location>
        <begin position="22"/>
        <end position="23"/>
    </location>
    <ligand>
        <name>substrate</name>
    </ligand>
</feature>
<feature type="binding site" evidence="2">
    <location>
        <position position="61"/>
    </location>
    <ligand>
        <name>substrate</name>
    </ligand>
</feature>
<feature type="binding site" evidence="2">
    <location>
        <begin position="88"/>
        <end position="91"/>
    </location>
    <ligand>
        <name>substrate</name>
    </ligand>
</feature>
<feature type="binding site" evidence="2">
    <location>
        <position position="99"/>
    </location>
    <ligand>
        <name>substrate</name>
    </ligand>
</feature>
<feature type="binding site" evidence="2">
    <location>
        <begin position="115"/>
        <end position="116"/>
    </location>
    <ligand>
        <name>substrate</name>
    </ligand>
</feature>
<feature type="binding site" evidence="2">
    <location>
        <begin position="184"/>
        <end position="185"/>
    </location>
    <ligand>
        <name>substrate</name>
    </ligand>
</feature>
<feature type="site" description="Transition state stabilizer" evidence="2">
    <location>
        <position position="183"/>
    </location>
</feature>
<dbReference type="EC" id="5.4.2.11" evidence="3"/>
<dbReference type="EC" id="5.4.2.4" evidence="3"/>
<dbReference type="EMBL" id="AAFI02000078">
    <property type="protein sequence ID" value="EAL64785.1"/>
    <property type="molecule type" value="Genomic_DNA"/>
</dbReference>
<dbReference type="RefSeq" id="XP_638289.1">
    <property type="nucleotide sequence ID" value="XM_633197.1"/>
</dbReference>
<dbReference type="SMR" id="Q54NE6"/>
<dbReference type="FunCoup" id="Q54NE6">
    <property type="interactions" value="361"/>
</dbReference>
<dbReference type="STRING" id="44689.Q54NE6"/>
<dbReference type="PaxDb" id="44689-DDB0231354"/>
<dbReference type="EnsemblProtists" id="EAL64785">
    <property type="protein sequence ID" value="EAL64785"/>
    <property type="gene ID" value="DDB_G0285311"/>
</dbReference>
<dbReference type="GeneID" id="8625042"/>
<dbReference type="KEGG" id="ddi:DDB_G0285311"/>
<dbReference type="dictyBase" id="DDB_G0285311">
    <property type="gene designation" value="gpmA"/>
</dbReference>
<dbReference type="VEuPathDB" id="AmoebaDB:DDB_G0285311"/>
<dbReference type="eggNOG" id="KOG0235">
    <property type="taxonomic scope" value="Eukaryota"/>
</dbReference>
<dbReference type="HOGENOM" id="CLU_033323_1_1_1"/>
<dbReference type="InParanoid" id="Q54NE6"/>
<dbReference type="OMA" id="MLPYWYD"/>
<dbReference type="PhylomeDB" id="Q54NE6"/>
<dbReference type="BRENDA" id="3.1.3.80">
    <property type="organism ID" value="1939"/>
</dbReference>
<dbReference type="Reactome" id="R-DDI-6798695">
    <property type="pathway name" value="Neutrophil degranulation"/>
</dbReference>
<dbReference type="Reactome" id="R-DDI-70171">
    <property type="pathway name" value="Glycolysis"/>
</dbReference>
<dbReference type="Reactome" id="R-DDI-70263">
    <property type="pathway name" value="Gluconeogenesis"/>
</dbReference>
<dbReference type="PRO" id="PR:Q54NE6"/>
<dbReference type="Proteomes" id="UP000002195">
    <property type="component" value="Chromosome 4"/>
</dbReference>
<dbReference type="GO" id="GO:0005829">
    <property type="term" value="C:cytosol"/>
    <property type="evidence" value="ECO:0000250"/>
    <property type="project" value="dictyBase"/>
</dbReference>
<dbReference type="GO" id="GO:0045335">
    <property type="term" value="C:phagocytic vesicle"/>
    <property type="evidence" value="ECO:0007005"/>
    <property type="project" value="dictyBase"/>
</dbReference>
<dbReference type="GO" id="GO:0004082">
    <property type="term" value="F:bisphosphoglycerate mutase activity"/>
    <property type="evidence" value="ECO:0007669"/>
    <property type="project" value="UniProtKB-EC"/>
</dbReference>
<dbReference type="GO" id="GO:0016787">
    <property type="term" value="F:hydrolase activity"/>
    <property type="evidence" value="ECO:0007669"/>
    <property type="project" value="UniProtKB-KW"/>
</dbReference>
<dbReference type="GO" id="GO:0004619">
    <property type="term" value="F:phosphoglycerate mutase activity"/>
    <property type="evidence" value="ECO:0000250"/>
    <property type="project" value="dictyBase"/>
</dbReference>
<dbReference type="GO" id="GO:0006094">
    <property type="term" value="P:gluconeogenesis"/>
    <property type="evidence" value="ECO:0000250"/>
    <property type="project" value="dictyBase"/>
</dbReference>
<dbReference type="GO" id="GO:0006096">
    <property type="term" value="P:glycolytic process"/>
    <property type="evidence" value="ECO:0000250"/>
    <property type="project" value="dictyBase"/>
</dbReference>
<dbReference type="CDD" id="cd07067">
    <property type="entry name" value="HP_PGM_like"/>
    <property type="match status" value="1"/>
</dbReference>
<dbReference type="FunFam" id="3.40.50.1240:FF:000003">
    <property type="entry name" value="2,3-bisphosphoglycerate-dependent phosphoglycerate mutase"/>
    <property type="match status" value="1"/>
</dbReference>
<dbReference type="Gene3D" id="3.40.50.1240">
    <property type="entry name" value="Phosphoglycerate mutase-like"/>
    <property type="match status" value="1"/>
</dbReference>
<dbReference type="HAMAP" id="MF_01039">
    <property type="entry name" value="PGAM_GpmA"/>
    <property type="match status" value="1"/>
</dbReference>
<dbReference type="InterPro" id="IPR013078">
    <property type="entry name" value="His_Pase_superF_clade-1"/>
</dbReference>
<dbReference type="InterPro" id="IPR029033">
    <property type="entry name" value="His_PPase_superfam"/>
</dbReference>
<dbReference type="InterPro" id="IPR001345">
    <property type="entry name" value="PG/BPGM_mutase_AS"/>
</dbReference>
<dbReference type="InterPro" id="IPR005952">
    <property type="entry name" value="Phosphogly_mut1"/>
</dbReference>
<dbReference type="NCBIfam" id="TIGR01258">
    <property type="entry name" value="pgm_1"/>
    <property type="match status" value="1"/>
</dbReference>
<dbReference type="NCBIfam" id="NF010713">
    <property type="entry name" value="PRK14115.1"/>
    <property type="match status" value="1"/>
</dbReference>
<dbReference type="PANTHER" id="PTHR11931">
    <property type="entry name" value="PHOSPHOGLYCERATE MUTASE"/>
    <property type="match status" value="1"/>
</dbReference>
<dbReference type="Pfam" id="PF00300">
    <property type="entry name" value="His_Phos_1"/>
    <property type="match status" value="1"/>
</dbReference>
<dbReference type="PIRSF" id="PIRSF000709">
    <property type="entry name" value="6PFK_2-Ptase"/>
    <property type="match status" value="1"/>
</dbReference>
<dbReference type="SMART" id="SM00855">
    <property type="entry name" value="PGAM"/>
    <property type="match status" value="1"/>
</dbReference>
<dbReference type="SUPFAM" id="SSF53254">
    <property type="entry name" value="Phosphoglycerate mutase-like"/>
    <property type="match status" value="1"/>
</dbReference>
<dbReference type="PROSITE" id="PS00175">
    <property type="entry name" value="PG_MUTASE"/>
    <property type="match status" value="1"/>
</dbReference>
<protein>
    <recommendedName>
        <fullName>Probable phosphoglycerate mutase</fullName>
        <ecNumber evidence="3">5.4.2.11</ecNumber>
        <ecNumber evidence="3">5.4.2.4</ecNumber>
    </recommendedName>
    <alternativeName>
        <fullName>BPG-dependent PGAM</fullName>
        <shortName>dPGM</shortName>
    </alternativeName>
</protein>
<comment type="function">
    <text evidence="1">Catalyzes the interconversion of 2-phosphoglycerate and 3-phosphoglycerate.</text>
</comment>
<comment type="catalytic activity">
    <reaction evidence="3">
        <text>(2R)-2-phosphoglycerate = (2R)-3-phosphoglycerate</text>
        <dbReference type="Rhea" id="RHEA:15901"/>
        <dbReference type="ChEBI" id="CHEBI:58272"/>
        <dbReference type="ChEBI" id="CHEBI:58289"/>
        <dbReference type="EC" id="5.4.2.11"/>
    </reaction>
</comment>
<comment type="catalytic activity">
    <reaction evidence="3">
        <text>(2R)-3-phospho-glyceroyl phosphate = (2R)-2,3-bisphosphoglycerate + H(+)</text>
        <dbReference type="Rhea" id="RHEA:17765"/>
        <dbReference type="ChEBI" id="CHEBI:15378"/>
        <dbReference type="ChEBI" id="CHEBI:57604"/>
        <dbReference type="ChEBI" id="CHEBI:58248"/>
        <dbReference type="EC" id="5.4.2.4"/>
    </reaction>
</comment>
<comment type="subunit">
    <text evidence="1">Homodimer.</text>
</comment>
<comment type="similarity">
    <text evidence="4">Belongs to the phosphoglycerate mutase family. BPG-dependent PGAM subfamily.</text>
</comment>
<proteinExistence type="evidence at protein level"/>
<keyword id="KW-0324">Glycolysis</keyword>
<keyword id="KW-0378">Hydrolase</keyword>
<keyword id="KW-0413">Isomerase</keyword>
<keyword id="KW-1185">Reference proteome</keyword>
<organism>
    <name type="scientific">Dictyostelium discoideum</name>
    <name type="common">Social amoeba</name>
    <dbReference type="NCBI Taxonomy" id="44689"/>
    <lineage>
        <taxon>Eukaryota</taxon>
        <taxon>Amoebozoa</taxon>
        <taxon>Evosea</taxon>
        <taxon>Eumycetozoa</taxon>
        <taxon>Dictyostelia</taxon>
        <taxon>Dictyosteliales</taxon>
        <taxon>Dictyosteliaceae</taxon>
        <taxon>Dictyostelium</taxon>
    </lineage>
</organism>
<name>PGAM_DICDI</name>
<sequence length="249" mass="28480">MVYKLVLIRHGESTWNKENKFTGWTDVDLSEKGVQEAHEAGKRLLKAGFTFDIAYTSVLKRAIRTLWILLEELNLYWIPVSRQWRLNERMYGSLQGLNKSETAAKYGEDQVLIWRRSYDIPPPALEESDERYPGNDPRYAKLDKSDLPKTECLKDTVERFLPLWNDTIAPTIKSGQKVLIAAHGNSIRALVKYLDNIADDKIVSMDIPTGIPLVYELDENLKPIKHYYLADESELNAAIQAVANQGKAK</sequence>
<reference key="1">
    <citation type="journal article" date="2005" name="Nature">
        <title>The genome of the social amoeba Dictyostelium discoideum.</title>
        <authorList>
            <person name="Eichinger L."/>
            <person name="Pachebat J.A."/>
            <person name="Gloeckner G."/>
            <person name="Rajandream M.A."/>
            <person name="Sucgang R."/>
            <person name="Berriman M."/>
            <person name="Song J."/>
            <person name="Olsen R."/>
            <person name="Szafranski K."/>
            <person name="Xu Q."/>
            <person name="Tunggal B."/>
            <person name="Kummerfeld S."/>
            <person name="Madera M."/>
            <person name="Konfortov B.A."/>
            <person name="Rivero F."/>
            <person name="Bankier A.T."/>
            <person name="Lehmann R."/>
            <person name="Hamlin N."/>
            <person name="Davies R."/>
            <person name="Gaudet P."/>
            <person name="Fey P."/>
            <person name="Pilcher K."/>
            <person name="Chen G."/>
            <person name="Saunders D."/>
            <person name="Sodergren E.J."/>
            <person name="Davis P."/>
            <person name="Kerhornou A."/>
            <person name="Nie X."/>
            <person name="Hall N."/>
            <person name="Anjard C."/>
            <person name="Hemphill L."/>
            <person name="Bason N."/>
            <person name="Farbrother P."/>
            <person name="Desany B."/>
            <person name="Just E."/>
            <person name="Morio T."/>
            <person name="Rost R."/>
            <person name="Churcher C.M."/>
            <person name="Cooper J."/>
            <person name="Haydock S."/>
            <person name="van Driessche N."/>
            <person name="Cronin A."/>
            <person name="Goodhead I."/>
            <person name="Muzny D.M."/>
            <person name="Mourier T."/>
            <person name="Pain A."/>
            <person name="Lu M."/>
            <person name="Harper D."/>
            <person name="Lindsay R."/>
            <person name="Hauser H."/>
            <person name="James K.D."/>
            <person name="Quiles M."/>
            <person name="Madan Babu M."/>
            <person name="Saito T."/>
            <person name="Buchrieser C."/>
            <person name="Wardroper A."/>
            <person name="Felder M."/>
            <person name="Thangavelu M."/>
            <person name="Johnson D."/>
            <person name="Knights A."/>
            <person name="Loulseged H."/>
            <person name="Mungall K.L."/>
            <person name="Oliver K."/>
            <person name="Price C."/>
            <person name="Quail M.A."/>
            <person name="Urushihara H."/>
            <person name="Hernandez J."/>
            <person name="Rabbinowitsch E."/>
            <person name="Steffen D."/>
            <person name="Sanders M."/>
            <person name="Ma J."/>
            <person name="Kohara Y."/>
            <person name="Sharp S."/>
            <person name="Simmonds M.N."/>
            <person name="Spiegler S."/>
            <person name="Tivey A."/>
            <person name="Sugano S."/>
            <person name="White B."/>
            <person name="Walker D."/>
            <person name="Woodward J.R."/>
            <person name="Winckler T."/>
            <person name="Tanaka Y."/>
            <person name="Shaulsky G."/>
            <person name="Schleicher M."/>
            <person name="Weinstock G.M."/>
            <person name="Rosenthal A."/>
            <person name="Cox E.C."/>
            <person name="Chisholm R.L."/>
            <person name="Gibbs R.A."/>
            <person name="Loomis W.F."/>
            <person name="Platzer M."/>
            <person name="Kay R.R."/>
            <person name="Williams J.G."/>
            <person name="Dear P.H."/>
            <person name="Noegel A.A."/>
            <person name="Barrell B.G."/>
            <person name="Kuspa A."/>
        </authorList>
    </citation>
    <scope>NUCLEOTIDE SEQUENCE [LARGE SCALE GENOMIC DNA]</scope>
    <source>
        <strain>AX4</strain>
    </source>
</reference>
<reference key="2">
    <citation type="journal article" date="2006" name="Mol. Cell. Proteomics">
        <title>Proteomics fingerprinting of phagosome maturation and evidence for the role of a Galpha during uptake.</title>
        <authorList>
            <person name="Gotthardt D."/>
            <person name="Blancheteau V."/>
            <person name="Bosserhoff A."/>
            <person name="Ruppert T."/>
            <person name="Delorenzi M."/>
            <person name="Soldati T."/>
        </authorList>
    </citation>
    <scope>IDENTIFICATION BY MASS SPECTROMETRY [LARGE SCALE ANALYSIS]</scope>
    <source>
        <strain>AX2</strain>
    </source>
</reference>